<comment type="similarity">
    <text evidence="1">Belongs to the UPF0284 family.</text>
</comment>
<evidence type="ECO:0000255" key="1">
    <source>
        <dbReference type="HAMAP-Rule" id="MF_01086"/>
    </source>
</evidence>
<protein>
    <recommendedName>
        <fullName evidence="1">UPF0284 protein alr0297</fullName>
    </recommendedName>
</protein>
<sequence>MIRIYTQLEQGEAWLRRYSDRLPLFTCILGFTETGLIPGISAAGRTPEDRKYTACADAEFLYYGAEHQPQYPLPPLTAGASPVLISRAVVEAFNMPVYLFNAGLPQSPAIPAIDLGGCPAKCLSTGAAMELTTVEHLFKQGLLWGERLAAEVPEGYVILSECVVGGTTTALAMLTGLGINAAGKVNSSHPVCNHEQKWQLVQQGLEAGKEAGGQGVGCRGDKSPIDPLKLVAAVGDPMQVVVAGMAIAASRGCGVMLAGGTQMLAVYALASAIAETYNLSWQPTAVVVATTRWVAEDSTGGTVELALNIGKNSQYPQIMTPPLLATKLSFANSQYPQLQAYEQGFVKEGVGAGAACIAANLYKNWQQHQLLQAIENQIQRLLDR</sequence>
<accession>Q8Z006</accession>
<name>Y297_NOSS1</name>
<keyword id="KW-1185">Reference proteome</keyword>
<feature type="chain" id="PRO_0000151039" description="UPF0284 protein alr0297">
    <location>
        <begin position="1"/>
        <end position="384"/>
    </location>
</feature>
<dbReference type="EMBL" id="BA000019">
    <property type="protein sequence ID" value="BAB77821.1"/>
    <property type="molecule type" value="Genomic_DNA"/>
</dbReference>
<dbReference type="PIR" id="AI1843">
    <property type="entry name" value="AI1843"/>
</dbReference>
<dbReference type="SMR" id="Q8Z006"/>
<dbReference type="STRING" id="103690.gene:10492305"/>
<dbReference type="KEGG" id="ana:alr0297"/>
<dbReference type="eggNOG" id="COG2038">
    <property type="taxonomic scope" value="Bacteria"/>
</dbReference>
<dbReference type="OrthoDB" id="418257at2"/>
<dbReference type="Proteomes" id="UP000002483">
    <property type="component" value="Chromosome"/>
</dbReference>
<dbReference type="GO" id="GO:0008939">
    <property type="term" value="F:nicotinate-nucleotide-dimethylbenzimidazole phosphoribosyltransferase activity"/>
    <property type="evidence" value="ECO:0007669"/>
    <property type="project" value="InterPro"/>
</dbReference>
<dbReference type="CDD" id="cd02439">
    <property type="entry name" value="DMB-PRT_CobT"/>
    <property type="match status" value="1"/>
</dbReference>
<dbReference type="Gene3D" id="3.40.50.10210">
    <property type="match status" value="1"/>
</dbReference>
<dbReference type="HAMAP" id="MF_01086">
    <property type="entry name" value="UPF0284"/>
    <property type="match status" value="1"/>
</dbReference>
<dbReference type="InterPro" id="IPR003200">
    <property type="entry name" value="Nict_dMeBzImd_PRibTrfase"/>
</dbReference>
<dbReference type="InterPro" id="IPR002805">
    <property type="entry name" value="Nict_dMeBzImd_PRibTrfase_arc"/>
</dbReference>
<dbReference type="InterPro" id="IPR036087">
    <property type="entry name" value="Nict_dMeBzImd_PRibTrfase_sf"/>
</dbReference>
<dbReference type="NCBIfam" id="TIGR00303">
    <property type="entry name" value="nicotinate mononucleotide-dependent phosphoribosyltransferase CobT"/>
    <property type="match status" value="1"/>
</dbReference>
<dbReference type="NCBIfam" id="NF003373">
    <property type="entry name" value="PRK04447.1-6"/>
    <property type="match status" value="1"/>
</dbReference>
<dbReference type="PANTHER" id="PTHR38811">
    <property type="match status" value="1"/>
</dbReference>
<dbReference type="PANTHER" id="PTHR38811:SF1">
    <property type="entry name" value="UPF0284 PROTEIN SLL1500"/>
    <property type="match status" value="1"/>
</dbReference>
<dbReference type="SUPFAM" id="SSF52733">
    <property type="entry name" value="Nicotinate mononucleotide:5,6-dimethylbenzimidazole phosphoribosyltransferase (CobT)"/>
    <property type="match status" value="1"/>
</dbReference>
<organism>
    <name type="scientific">Nostoc sp. (strain PCC 7120 / SAG 25.82 / UTEX 2576)</name>
    <dbReference type="NCBI Taxonomy" id="103690"/>
    <lineage>
        <taxon>Bacteria</taxon>
        <taxon>Bacillati</taxon>
        <taxon>Cyanobacteriota</taxon>
        <taxon>Cyanophyceae</taxon>
        <taxon>Nostocales</taxon>
        <taxon>Nostocaceae</taxon>
        <taxon>Nostoc</taxon>
    </lineage>
</organism>
<reference key="1">
    <citation type="journal article" date="2001" name="DNA Res.">
        <title>Complete genomic sequence of the filamentous nitrogen-fixing cyanobacterium Anabaena sp. strain PCC 7120.</title>
        <authorList>
            <person name="Kaneko T."/>
            <person name="Nakamura Y."/>
            <person name="Wolk C.P."/>
            <person name="Kuritz T."/>
            <person name="Sasamoto S."/>
            <person name="Watanabe A."/>
            <person name="Iriguchi M."/>
            <person name="Ishikawa A."/>
            <person name="Kawashima K."/>
            <person name="Kimura T."/>
            <person name="Kishida Y."/>
            <person name="Kohara M."/>
            <person name="Matsumoto M."/>
            <person name="Matsuno A."/>
            <person name="Muraki A."/>
            <person name="Nakazaki N."/>
            <person name="Shimpo S."/>
            <person name="Sugimoto M."/>
            <person name="Takazawa M."/>
            <person name="Yamada M."/>
            <person name="Yasuda M."/>
            <person name="Tabata S."/>
        </authorList>
    </citation>
    <scope>NUCLEOTIDE SEQUENCE [LARGE SCALE GENOMIC DNA]</scope>
    <source>
        <strain>PCC 7120 / SAG 25.82 / UTEX 2576</strain>
    </source>
</reference>
<gene>
    <name type="ordered locus">alr0297</name>
</gene>
<proteinExistence type="inferred from homology"/>